<proteinExistence type="inferred from homology"/>
<comment type="function">
    <text>Capsid protein self-assembles to form rod-shaped virions about 18 nm in diameter with a central canal enclosing the viral genomic RNA.</text>
</comment>
<comment type="subcellular location">
    <subcellularLocation>
        <location evidence="2">Virion</location>
    </subcellularLocation>
</comment>
<comment type="similarity">
    <text evidence="2">Belongs to the virgaviridae capsid protein family.</text>
</comment>
<keyword id="KW-0007">Acetylation</keyword>
<keyword id="KW-0167">Capsid protein</keyword>
<keyword id="KW-1139">Helical capsid protein</keyword>
<keyword id="KW-0946">Virion</keyword>
<sequence length="157" mass="17601">MSYNITNPNQYQYFAAVWAEPIPMLNQCMSALSQSYQTQAARDTVRQQFSNLLSAVVTPSQRFPDTGSRVYVNSAVIKPLYEALMKSFDTRNRIIETEEESRPSASEVANATQRVDDATVAIRSQIQLLLSELSNGHGYMNRAEFEALLPWTTAPAT</sequence>
<feature type="initiator methionine" description="Removed; by host" evidence="1">
    <location>
        <position position="1"/>
    </location>
</feature>
<feature type="chain" id="PRO_0000144952" description="Capsid protein">
    <location>
        <begin position="2"/>
        <end position="157"/>
    </location>
</feature>
<feature type="modified residue" description="N-acetylserine; by host" evidence="1">
    <location>
        <position position="2"/>
    </location>
</feature>
<organismHost>
    <name type="scientific">Brassicaceae</name>
    <dbReference type="NCBI Taxonomy" id="3700"/>
</organismHost>
<name>CAPSD_TVCV</name>
<evidence type="ECO:0000250" key="1"/>
<evidence type="ECO:0000305" key="2"/>
<protein>
    <recommendedName>
        <fullName>Capsid protein</fullName>
    </recommendedName>
    <alternativeName>
        <fullName>Coat protein</fullName>
    </alternativeName>
</protein>
<organism>
    <name type="scientific">Turnip vein-clearing virus</name>
    <name type="common">TVCV</name>
    <dbReference type="NCBI Taxonomy" id="29272"/>
    <lineage>
        <taxon>Viruses</taxon>
        <taxon>Riboviria</taxon>
        <taxon>Orthornavirae</taxon>
        <taxon>Kitrinoviricota</taxon>
        <taxon>Alsuviricetes</taxon>
        <taxon>Martellivirales</taxon>
        <taxon>Virgaviridae</taxon>
        <taxon>Tobamovirus</taxon>
    </lineage>
</organism>
<dbReference type="EMBL" id="U03387">
    <property type="protein sequence ID" value="AAC02785.1"/>
    <property type="molecule type" value="Genomic_RNA"/>
</dbReference>
<dbReference type="RefSeq" id="NP_046154.1">
    <property type="nucleotide sequence ID" value="NC_001873.1"/>
</dbReference>
<dbReference type="SMR" id="Q88922"/>
<dbReference type="KEGG" id="vg:1494925"/>
<dbReference type="OrthoDB" id="12635at10239"/>
<dbReference type="Proteomes" id="UP000008264">
    <property type="component" value="Genome"/>
</dbReference>
<dbReference type="GO" id="GO:0019029">
    <property type="term" value="C:helical viral capsid"/>
    <property type="evidence" value="ECO:0007669"/>
    <property type="project" value="UniProtKB-KW"/>
</dbReference>
<dbReference type="GO" id="GO:0005198">
    <property type="term" value="F:structural molecule activity"/>
    <property type="evidence" value="ECO:0007669"/>
    <property type="project" value="InterPro"/>
</dbReference>
<dbReference type="Gene3D" id="1.20.120.70">
    <property type="entry name" value="Tobacco mosaic virus-like, coat protein"/>
    <property type="match status" value="1"/>
</dbReference>
<dbReference type="InterPro" id="IPR001337">
    <property type="entry name" value="TMV-like_coat"/>
</dbReference>
<dbReference type="InterPro" id="IPR036417">
    <property type="entry name" value="TMV-like_coat_sf"/>
</dbReference>
<dbReference type="Pfam" id="PF00721">
    <property type="entry name" value="TMV_coat"/>
    <property type="match status" value="1"/>
</dbReference>
<dbReference type="SUPFAM" id="SSF47195">
    <property type="entry name" value="TMV-like viral coat proteins"/>
    <property type="match status" value="1"/>
</dbReference>
<reference key="1">
    <citation type="journal article" date="1995" name="Gene">
        <title>Completion of a cDNA sequence from a tobamovirus pathogenic to crucifers.</title>
        <authorList>
            <person name="Lartey R.T."/>
            <person name="Voss T.C."/>
            <person name="Melcher U.K."/>
        </authorList>
    </citation>
    <scope>NUCLEOTIDE SEQUENCE [GENOMIC RNA]</scope>
    <source>
        <strain>OSU</strain>
    </source>
</reference>
<reference key="2">
    <citation type="journal article" date="1997" name="Gene">
        <authorList>
            <person name="Lartey R.T."/>
            <person name="Voss T.C."/>
            <person name="Melcher U.K."/>
        </authorList>
    </citation>
    <scope>ERRATUM OF PUBMED:8543186</scope>
</reference>
<accession>Q88922</accession>
<gene>
    <name type="primary">CP</name>
</gene>